<sequence>MLTRSKAGINKLNPKYSLTITTTIKKEPKSVIFALKDPGWCQAMQEELDALSRNKTWILVPPPVNQNILGCKWVFKTKLHSDGTLDRLKARLVAKGFHQEEGIYFVETYSPVVRTATIRTILNVAQQLEVGQSINWMFKMHFSMGIFKKKFICINLLVLRILFIHPMCVC</sequence>
<evidence type="ECO:0000305" key="1"/>
<evidence type="ECO:0000312" key="2">
    <source>
        <dbReference type="Araport" id="AT2G07683"/>
    </source>
</evidence>
<evidence type="ECO:0000312" key="3">
    <source>
        <dbReference type="Araport" id="ATMG00820"/>
    </source>
</evidence>
<gene>
    <name evidence="3" type="ordered locus">AtMg00820</name>
</gene>
<gene>
    <name evidence="2" type="ordered locus">At2g07683</name>
</gene>
<proteinExistence type="predicted"/>
<keyword id="KW-0496">Mitochondrion</keyword>
<keyword id="KW-1185">Reference proteome</keyword>
<feature type="chain" id="PRO_0000196793" description="Uncharacterized mitochondrial protein AtMg00820">
    <location>
        <begin position="1"/>
        <end position="170"/>
    </location>
</feature>
<name>M820_ARATH</name>
<protein>
    <recommendedName>
        <fullName>Uncharacterized mitochondrial protein AtMg00820</fullName>
    </recommendedName>
    <alternativeName>
        <fullName>ORF170</fullName>
    </alternativeName>
</protein>
<accession>P92520</accession>
<accession>Q1ZXZ3</accession>
<accession>Q8S884</accession>
<accession>Q8S8B8</accession>
<organism>
    <name type="scientific">Arabidopsis thaliana</name>
    <name type="common">Mouse-ear cress</name>
    <dbReference type="NCBI Taxonomy" id="3702"/>
    <lineage>
        <taxon>Eukaryota</taxon>
        <taxon>Viridiplantae</taxon>
        <taxon>Streptophyta</taxon>
        <taxon>Embryophyta</taxon>
        <taxon>Tracheophyta</taxon>
        <taxon>Spermatophyta</taxon>
        <taxon>Magnoliopsida</taxon>
        <taxon>eudicotyledons</taxon>
        <taxon>Gunneridae</taxon>
        <taxon>Pentapetalae</taxon>
        <taxon>rosids</taxon>
        <taxon>malvids</taxon>
        <taxon>Brassicales</taxon>
        <taxon>Brassicaceae</taxon>
        <taxon>Camelineae</taxon>
        <taxon>Arabidopsis</taxon>
    </lineage>
</organism>
<geneLocation type="mitochondrion"/>
<reference key="1">
    <citation type="journal article" date="1997" name="Nat. Genet.">
        <title>The mitochondrial genome of Arabidopsis thaliana contains 57 genes in 366,924 nucleotides.</title>
        <authorList>
            <person name="Unseld M."/>
            <person name="Marienfeld J.R."/>
            <person name="Brandt P."/>
            <person name="Brennicke A."/>
        </authorList>
    </citation>
    <scope>NUCLEOTIDE SEQUENCE [LARGE SCALE GENOMIC DNA]</scope>
    <source>
        <strain>cv. C24</strain>
    </source>
</reference>
<reference key="2">
    <citation type="journal article" date="2018" name="Plant Cell">
        <title>Correction of persistent errors in Arabidopsis reference mitochondrial genomes.</title>
        <authorList>
            <person name="Sloan D.B."/>
            <person name="Wu Z."/>
            <person name="Sharbrough J."/>
        </authorList>
    </citation>
    <scope>NUCLEOTIDE SEQUENCE [LARGE SCALE GENOMIC DNA]</scope>
    <source>
        <strain>cv. Columbia</strain>
    </source>
</reference>
<reference key="3">
    <citation type="journal article" date="1999" name="Nature">
        <title>Sequence and analysis of chromosome 2 of the plant Arabidopsis thaliana.</title>
        <authorList>
            <person name="Lin X."/>
            <person name="Kaul S."/>
            <person name="Rounsley S.D."/>
            <person name="Shea T.P."/>
            <person name="Benito M.-I."/>
            <person name="Town C.D."/>
            <person name="Fujii C.Y."/>
            <person name="Mason T.M."/>
            <person name="Bowman C.L."/>
            <person name="Barnstead M.E."/>
            <person name="Feldblyum T.V."/>
            <person name="Buell C.R."/>
            <person name="Ketchum K.A."/>
            <person name="Lee J.J."/>
            <person name="Ronning C.M."/>
            <person name="Koo H.L."/>
            <person name="Moffat K.S."/>
            <person name="Cronin L.A."/>
            <person name="Shen M."/>
            <person name="Pai G."/>
            <person name="Van Aken S."/>
            <person name="Umayam L."/>
            <person name="Tallon L.J."/>
            <person name="Gill J.E."/>
            <person name="Adams M.D."/>
            <person name="Carrera A.J."/>
            <person name="Creasy T.H."/>
            <person name="Goodman H.M."/>
            <person name="Somerville C.R."/>
            <person name="Copenhaver G.P."/>
            <person name="Preuss D."/>
            <person name="Nierman W.C."/>
            <person name="White O."/>
            <person name="Eisen J.A."/>
            <person name="Salzberg S.L."/>
            <person name="Fraser C.M."/>
            <person name="Venter J.C."/>
        </authorList>
    </citation>
    <scope>NUCLEOTIDE SEQUENCE [LARGE SCALE GENOMIC DNA] (AT2G07683)</scope>
    <source>
        <strain>cv. Columbia</strain>
    </source>
</reference>
<reference key="4">
    <citation type="journal article" date="2017" name="Plant J.">
        <title>Araport11: a complete reannotation of the Arabidopsis thaliana reference genome.</title>
        <authorList>
            <person name="Cheng C.Y."/>
            <person name="Krishnakumar V."/>
            <person name="Chan A.P."/>
            <person name="Thibaud-Nissen F."/>
            <person name="Schobel S."/>
            <person name="Town C.D."/>
        </authorList>
    </citation>
    <scope>GENOME REANNOTATION (AT2G07683)</scope>
    <source>
        <strain>cv. Columbia</strain>
    </source>
</reference>
<comment type="subcellular location">
    <subcellularLocation>
        <location evidence="1">Mitochondrion</location>
    </subcellularLocation>
</comment>
<comment type="miscellaneous">
    <text>A stretch of 270 kb of the mitochondrial genome is duplicated within the centromere of chromosome 2 resulting in the duplication of the gene. The expression of this duplicated gene (At2g07683) is not demonstrated.</text>
</comment>
<comment type="sequence caution" evidence="1">
    <conflict type="erroneous gene model prediction">
        <sequence resource="EMBL-CDS" id="AAM15418"/>
    </conflict>
</comment>
<comment type="sequence caution" evidence="1">
    <conflict type="erroneous gene model prediction">
        <sequence resource="EMBL-CDS" id="AAM15511"/>
    </conflict>
</comment>
<dbReference type="EMBL" id="Y08501">
    <property type="protein sequence ID" value="CAA69824.1"/>
    <property type="molecule type" value="Genomic_DNA"/>
</dbReference>
<dbReference type="EMBL" id="BK010421">
    <property type="status" value="NOT_ANNOTATED_CDS"/>
    <property type="molecule type" value="Genomic_DNA"/>
</dbReference>
<dbReference type="EMBL" id="AC007143">
    <property type="protein sequence ID" value="AAM15418.1"/>
    <property type="status" value="ALT_SEQ"/>
    <property type="molecule type" value="Genomic_DNA"/>
</dbReference>
<dbReference type="EMBL" id="AC007730">
    <property type="protein sequence ID" value="AAM15511.1"/>
    <property type="status" value="ALT_SEQ"/>
    <property type="molecule type" value="Genomic_DNA"/>
</dbReference>
<dbReference type="EMBL" id="CP002685">
    <property type="status" value="NOT_ANNOTATED_CDS"/>
    <property type="molecule type" value="Genomic_DNA"/>
</dbReference>
<dbReference type="RefSeq" id="NP_085538.1">
    <property type="nucleotide sequence ID" value="NC_001284.2"/>
</dbReference>
<dbReference type="STRING" id="3702.P92520"/>
<dbReference type="PaxDb" id="3702-ATMG00820.1"/>
<dbReference type="EnsemblPlants" id="ATMG00820.1">
    <property type="protein sequence ID" value="ATMG00820.1"/>
    <property type="gene ID" value="ATMG00820"/>
</dbReference>
<dbReference type="Gramene" id="ATMG00820.1">
    <property type="protein sequence ID" value="ATMG00820.1"/>
    <property type="gene ID" value="ATMG00820"/>
</dbReference>
<dbReference type="Araport" id="AT2G07683"/>
<dbReference type="Araport" id="ATMG00820"/>
<dbReference type="TAIR" id="AT2G07683"/>
<dbReference type="TAIR" id="ATMG00820">
    <property type="gene designation" value="ORF170"/>
</dbReference>
<dbReference type="eggNOG" id="KOG0017">
    <property type="taxonomic scope" value="Eukaryota"/>
</dbReference>
<dbReference type="HOGENOM" id="CLU_1572804_0_0_1"/>
<dbReference type="InParanoid" id="P92520"/>
<dbReference type="OMA" id="TISQHKA"/>
<dbReference type="Proteomes" id="UP000006548">
    <property type="component" value="Chromosome 2"/>
</dbReference>
<dbReference type="Proteomes" id="UP000006548">
    <property type="component" value="Mitochondrion MT"/>
</dbReference>
<dbReference type="ExpressionAtlas" id="P92520">
    <property type="expression patterns" value="baseline and differential"/>
</dbReference>
<dbReference type="GO" id="GO:0005739">
    <property type="term" value="C:mitochondrion"/>
    <property type="evidence" value="ECO:0007669"/>
    <property type="project" value="UniProtKB-SubCell"/>
</dbReference>
<dbReference type="InterPro" id="IPR013103">
    <property type="entry name" value="RVT_2"/>
</dbReference>
<dbReference type="Pfam" id="PF07727">
    <property type="entry name" value="RVT_2"/>
    <property type="match status" value="1"/>
</dbReference>